<proteinExistence type="evidence at transcript level"/>
<reference evidence="6" key="1">
    <citation type="journal article" date="2002" name="J. Exp. Bot.">
        <title>Ethylene-responsive genes are differentially regulated during abscission, organ senescence and wounding in peach (Prunus persica).</title>
        <authorList>
            <person name="Ruperti B."/>
            <person name="Cattivelli L."/>
            <person name="Pagni S."/>
            <person name="Ramina A."/>
        </authorList>
    </citation>
    <scope>NUCLEOTIDE SEQUENCE [MRNA]</scope>
    <scope>TISSUE SPECIFICITY</scope>
    <scope>DEVELOPMENTAL STAGE</scope>
    <scope>INDUCTION</scope>
    <source>
        <strain>cv. Springcrest</strain>
        <tissue>Abscission zone</tissue>
    </source>
</reference>
<name>TLP2_PRUPE</name>
<keyword id="KW-1015">Disulfide bond</keyword>
<keyword id="KW-0611">Plant defense</keyword>
<keyword id="KW-0964">Secreted</keyword>
<keyword id="KW-0732">Signal</keyword>
<feature type="signal peptide" evidence="2">
    <location>
        <begin position="1"/>
        <end position="23"/>
    </location>
</feature>
<feature type="chain" id="PRO_0000034023" description="Thaumatin-like protein 2" evidence="2">
    <location>
        <begin position="24"/>
        <end position="242"/>
    </location>
</feature>
<feature type="disulfide bond" evidence="1 3">
    <location>
        <begin position="32"/>
        <end position="241"/>
    </location>
</feature>
<feature type="disulfide bond" evidence="1 3">
    <location>
        <begin position="77"/>
        <end position="87"/>
    </location>
</feature>
<feature type="disulfide bond" evidence="1 3">
    <location>
        <begin position="92"/>
        <end position="99"/>
    </location>
</feature>
<feature type="disulfide bond" evidence="1 3">
    <location>
        <begin position="147"/>
        <end position="230"/>
    </location>
</feature>
<feature type="disulfide bond" evidence="1 3">
    <location>
        <begin position="152"/>
        <end position="213"/>
    </location>
</feature>
<feature type="disulfide bond" evidence="1 3">
    <location>
        <begin position="160"/>
        <end position="176"/>
    </location>
</feature>
<feature type="disulfide bond" evidence="1 3">
    <location>
        <begin position="180"/>
        <end position="189"/>
    </location>
</feature>
<feature type="disulfide bond" evidence="1 3">
    <location>
        <begin position="190"/>
        <end position="200"/>
    </location>
</feature>
<organism evidence="7">
    <name type="scientific">Prunus persica</name>
    <name type="common">Peach</name>
    <name type="synonym">Amygdalus persica</name>
    <dbReference type="NCBI Taxonomy" id="3760"/>
    <lineage>
        <taxon>Eukaryota</taxon>
        <taxon>Viridiplantae</taxon>
        <taxon>Streptophyta</taxon>
        <taxon>Embryophyta</taxon>
        <taxon>Tracheophyta</taxon>
        <taxon>Spermatophyta</taxon>
        <taxon>Magnoliopsida</taxon>
        <taxon>eudicotyledons</taxon>
        <taxon>Gunneridae</taxon>
        <taxon>Pentapetalae</taxon>
        <taxon>rosids</taxon>
        <taxon>fabids</taxon>
        <taxon>Rosales</taxon>
        <taxon>Rosaceae</taxon>
        <taxon>Amygdaloideae</taxon>
        <taxon>Amygdaleae</taxon>
        <taxon>Prunus</taxon>
    </lineage>
</organism>
<sequence length="242" mass="25608">MMKTLGAVLSLSLTLLSFGGAHAATMSFKNNCPYTVWPASFGNPQLSTTGFELASQASFQLDTPVPWSGRFWARTRCSTDASGKFVCETADCDSGQLMCNGKTGIPPATLAEFTIAAGGGQDFYDVSLVDGFNLPMSVTPQGGTGTCKMGSCAANVNLVCPSELQKIGSDGSVVACLSACVKFGEPQYCCTPPQETKEKCPPTNYSQIFHEQCPDAYSYAFDDNKGLFTCSGGPNYLITFCP</sequence>
<evidence type="ECO:0000250" key="1">
    <source>
        <dbReference type="UniProtKB" id="P02883"/>
    </source>
</evidence>
<evidence type="ECO:0000255" key="2"/>
<evidence type="ECO:0000255" key="3">
    <source>
        <dbReference type="PROSITE-ProRule" id="PRU00699"/>
    </source>
</evidence>
<evidence type="ECO:0000269" key="4">
    <source>
    </source>
</evidence>
<evidence type="ECO:0000303" key="5">
    <source>
    </source>
</evidence>
<evidence type="ECO:0000305" key="6"/>
<evidence type="ECO:0000312" key="7">
    <source>
        <dbReference type="EMBL" id="AAM00215.1"/>
    </source>
</evidence>
<comment type="function">
    <text evidence="5">May be involved in protecting plant tissues from pathogen infection.</text>
</comment>
<comment type="subcellular location">
    <subcellularLocation>
        <location evidence="6">Secreted</location>
    </subcellularLocation>
</comment>
<comment type="tissue specificity">
    <text evidence="4">Preferentially expressed in the abscission zone of fruit. Also expressed in leaf abscission zone.</text>
</comment>
<comment type="developmental stage">
    <text evidence="4">Expressed during leaf senescence but not during fruit ripening.</text>
</comment>
<comment type="induction">
    <text evidence="4">Up-regulated in the abscission zone following treatment with propylene and in both the abscission zone and surrounding tissues after wounding due to embryoctomy.</text>
</comment>
<comment type="similarity">
    <text evidence="1 3">Belongs to the thaumatin family.</text>
</comment>
<protein>
    <recommendedName>
        <fullName>Thaumatin-like protein 2</fullName>
    </recommendedName>
    <alternativeName>
        <fullName>PpAZ8</fullName>
    </alternativeName>
</protein>
<accession>P83335</accession>
<dbReference type="EMBL" id="AF362988">
    <property type="protein sequence ID" value="AAM00215.1"/>
    <property type="molecule type" value="mRNA"/>
</dbReference>
<dbReference type="SMR" id="P83335"/>
<dbReference type="Allergome" id="5977">
    <property type="allergen name" value="Pru p 2"/>
</dbReference>
<dbReference type="eggNOG" id="ENOG502QQ6D">
    <property type="taxonomic scope" value="Eukaryota"/>
</dbReference>
<dbReference type="GO" id="GO:0005576">
    <property type="term" value="C:extracellular region"/>
    <property type="evidence" value="ECO:0007669"/>
    <property type="project" value="UniProtKB-SubCell"/>
</dbReference>
<dbReference type="GO" id="GO:0006952">
    <property type="term" value="P:defense response"/>
    <property type="evidence" value="ECO:0000270"/>
    <property type="project" value="UniProtKB"/>
</dbReference>
<dbReference type="CDD" id="cd09218">
    <property type="entry name" value="TLP-PA"/>
    <property type="match status" value="1"/>
</dbReference>
<dbReference type="FunFam" id="2.60.110.10:FF:000002">
    <property type="entry name" value="Thaumatin-like protein 1a"/>
    <property type="match status" value="1"/>
</dbReference>
<dbReference type="Gene3D" id="2.60.110.10">
    <property type="entry name" value="Thaumatin"/>
    <property type="match status" value="1"/>
</dbReference>
<dbReference type="InterPro" id="IPR037176">
    <property type="entry name" value="Osmotin/thaumatin-like_sf"/>
</dbReference>
<dbReference type="InterPro" id="IPR001938">
    <property type="entry name" value="Thaumatin"/>
</dbReference>
<dbReference type="InterPro" id="IPR017949">
    <property type="entry name" value="Thaumatin_CS"/>
</dbReference>
<dbReference type="PANTHER" id="PTHR31048">
    <property type="entry name" value="OS03G0233200 PROTEIN"/>
    <property type="match status" value="1"/>
</dbReference>
<dbReference type="Pfam" id="PF00314">
    <property type="entry name" value="Thaumatin"/>
    <property type="match status" value="1"/>
</dbReference>
<dbReference type="PIRSF" id="PIRSF002703">
    <property type="entry name" value="Thaumatin"/>
    <property type="match status" value="1"/>
</dbReference>
<dbReference type="PRINTS" id="PR00347">
    <property type="entry name" value="THAUMATIN"/>
</dbReference>
<dbReference type="SMART" id="SM00205">
    <property type="entry name" value="THN"/>
    <property type="match status" value="1"/>
</dbReference>
<dbReference type="SUPFAM" id="SSF49870">
    <property type="entry name" value="Osmotin, thaumatin-like protein"/>
    <property type="match status" value="1"/>
</dbReference>
<dbReference type="PROSITE" id="PS00316">
    <property type="entry name" value="THAUMATIN_1"/>
    <property type="match status" value="1"/>
</dbReference>
<dbReference type="PROSITE" id="PS51367">
    <property type="entry name" value="THAUMATIN_2"/>
    <property type="match status" value="1"/>
</dbReference>